<organism>
    <name type="scientific">Acinetobacter baylyi (strain ATCC 33305 / BD413 / ADP1)</name>
    <dbReference type="NCBI Taxonomy" id="62977"/>
    <lineage>
        <taxon>Bacteria</taxon>
        <taxon>Pseudomonadati</taxon>
        <taxon>Pseudomonadota</taxon>
        <taxon>Gammaproteobacteria</taxon>
        <taxon>Moraxellales</taxon>
        <taxon>Moraxellaceae</taxon>
        <taxon>Acinetobacter</taxon>
    </lineage>
</organism>
<proteinExistence type="inferred from homology"/>
<sequence length="390" mass="41215">MTNLNPRDVVIVDGVRSAMGKSKNGMFRNVRADSLSAELVRALVARNQFDVNEVEDLIWGCVNQTLEQGMNIGRNIVLLADLPKTVAGQTVNRLCGSSMQAIHTAAAQIATNQGDIFIIGGVEHMGHVGMMHGIDLNPEASKHYAKASNMMGLTAEMLGRMNGIGREEQDAFGVESHRRAWAATQEGRFKNEIVGVEGHDANGFKILCDIDEVIRPDANLEAFKALRPVFDPKGGTVTAATSSALSDGASAMLLMSAERAQALGLKPRAVIRSMAVAGCDAAIMGYGPVPATQKALKRAGLSVADIQTVELNEAFAAQGLSVLKGLGLYEKQDIVNLNGGAIALGHPLGCSGARITTTLLNVMEQQDTQIGLATMCIGLGQGIATVIERV</sequence>
<comment type="function">
    <text evidence="1">Catalyzes the final step of fatty acid oxidation in which acetyl-CoA is released and the CoA ester of a fatty acid two carbons shorter is formed.</text>
</comment>
<comment type="catalytic activity">
    <reaction evidence="1">
        <text>an acyl-CoA + acetyl-CoA = a 3-oxoacyl-CoA + CoA</text>
        <dbReference type="Rhea" id="RHEA:21564"/>
        <dbReference type="ChEBI" id="CHEBI:57287"/>
        <dbReference type="ChEBI" id="CHEBI:57288"/>
        <dbReference type="ChEBI" id="CHEBI:58342"/>
        <dbReference type="ChEBI" id="CHEBI:90726"/>
        <dbReference type="EC" id="2.3.1.16"/>
    </reaction>
</comment>
<comment type="pathway">
    <text evidence="1">Lipid metabolism; fatty acid beta-oxidation.</text>
</comment>
<comment type="subunit">
    <text evidence="1">Heterotetramer of two alpha chains (FadB) and two beta chains (FadA).</text>
</comment>
<comment type="subcellular location">
    <subcellularLocation>
        <location evidence="1">Cytoplasm</location>
    </subcellularLocation>
</comment>
<comment type="similarity">
    <text evidence="1">Belongs to the thiolase-like superfamily. Thiolase family.</text>
</comment>
<dbReference type="EC" id="2.3.1.16" evidence="1"/>
<dbReference type="EMBL" id="CR543861">
    <property type="protein sequence ID" value="CAG67288.1"/>
    <property type="molecule type" value="Genomic_DNA"/>
</dbReference>
<dbReference type="RefSeq" id="WP_004920543.1">
    <property type="nucleotide sequence ID" value="NC_005966.1"/>
</dbReference>
<dbReference type="SMR" id="Q6FF69"/>
<dbReference type="STRING" id="202950.GCA_001485005_00600"/>
<dbReference type="GeneID" id="45232841"/>
<dbReference type="KEGG" id="aci:ACIAD0334"/>
<dbReference type="eggNOG" id="COG0183">
    <property type="taxonomic scope" value="Bacteria"/>
</dbReference>
<dbReference type="HOGENOM" id="CLU_031026_2_2_6"/>
<dbReference type="OrthoDB" id="8951704at2"/>
<dbReference type="BioCyc" id="ASP62977:ACIAD_RS01565-MONOMER"/>
<dbReference type="UniPathway" id="UPA00659"/>
<dbReference type="Proteomes" id="UP000000430">
    <property type="component" value="Chromosome"/>
</dbReference>
<dbReference type="GO" id="GO:0005737">
    <property type="term" value="C:cytoplasm"/>
    <property type="evidence" value="ECO:0007669"/>
    <property type="project" value="UniProtKB-SubCell"/>
</dbReference>
<dbReference type="GO" id="GO:0003988">
    <property type="term" value="F:acetyl-CoA C-acyltransferase activity"/>
    <property type="evidence" value="ECO:0007669"/>
    <property type="project" value="UniProtKB-UniRule"/>
</dbReference>
<dbReference type="GO" id="GO:0006635">
    <property type="term" value="P:fatty acid beta-oxidation"/>
    <property type="evidence" value="ECO:0007669"/>
    <property type="project" value="UniProtKB-UniRule"/>
</dbReference>
<dbReference type="GO" id="GO:0010124">
    <property type="term" value="P:phenylacetate catabolic process"/>
    <property type="evidence" value="ECO:0007669"/>
    <property type="project" value="TreeGrafter"/>
</dbReference>
<dbReference type="CDD" id="cd00751">
    <property type="entry name" value="thiolase"/>
    <property type="match status" value="1"/>
</dbReference>
<dbReference type="FunFam" id="3.40.47.10:FF:000010">
    <property type="entry name" value="Acetyl-CoA acetyltransferase (Thiolase)"/>
    <property type="match status" value="1"/>
</dbReference>
<dbReference type="Gene3D" id="3.40.47.10">
    <property type="match status" value="2"/>
</dbReference>
<dbReference type="HAMAP" id="MF_01620">
    <property type="entry name" value="FadA"/>
    <property type="match status" value="1"/>
</dbReference>
<dbReference type="InterPro" id="IPR012805">
    <property type="entry name" value="FadA"/>
</dbReference>
<dbReference type="InterPro" id="IPR002155">
    <property type="entry name" value="Thiolase"/>
</dbReference>
<dbReference type="InterPro" id="IPR016039">
    <property type="entry name" value="Thiolase-like"/>
</dbReference>
<dbReference type="InterPro" id="IPR050215">
    <property type="entry name" value="Thiolase-like_sf_Thiolase"/>
</dbReference>
<dbReference type="InterPro" id="IPR020615">
    <property type="entry name" value="Thiolase_acyl_enz_int_AS"/>
</dbReference>
<dbReference type="InterPro" id="IPR020610">
    <property type="entry name" value="Thiolase_AS"/>
</dbReference>
<dbReference type="InterPro" id="IPR020617">
    <property type="entry name" value="Thiolase_C"/>
</dbReference>
<dbReference type="InterPro" id="IPR020613">
    <property type="entry name" value="Thiolase_CS"/>
</dbReference>
<dbReference type="InterPro" id="IPR020616">
    <property type="entry name" value="Thiolase_N"/>
</dbReference>
<dbReference type="NCBIfam" id="TIGR01930">
    <property type="entry name" value="AcCoA-C-Actrans"/>
    <property type="match status" value="1"/>
</dbReference>
<dbReference type="NCBIfam" id="TIGR02445">
    <property type="entry name" value="fadA"/>
    <property type="match status" value="1"/>
</dbReference>
<dbReference type="NCBIfam" id="NF006510">
    <property type="entry name" value="PRK08947.1"/>
    <property type="match status" value="1"/>
</dbReference>
<dbReference type="PANTHER" id="PTHR43853:SF11">
    <property type="entry name" value="3-KETOACYL-COA THIOLASE FADA"/>
    <property type="match status" value="1"/>
</dbReference>
<dbReference type="PANTHER" id="PTHR43853">
    <property type="entry name" value="3-KETOACYL-COA THIOLASE, PEROXISOMAL"/>
    <property type="match status" value="1"/>
</dbReference>
<dbReference type="Pfam" id="PF02803">
    <property type="entry name" value="Thiolase_C"/>
    <property type="match status" value="1"/>
</dbReference>
<dbReference type="Pfam" id="PF00108">
    <property type="entry name" value="Thiolase_N"/>
    <property type="match status" value="1"/>
</dbReference>
<dbReference type="PIRSF" id="PIRSF000429">
    <property type="entry name" value="Ac-CoA_Ac_transf"/>
    <property type="match status" value="1"/>
</dbReference>
<dbReference type="SUPFAM" id="SSF53901">
    <property type="entry name" value="Thiolase-like"/>
    <property type="match status" value="2"/>
</dbReference>
<dbReference type="PROSITE" id="PS00098">
    <property type="entry name" value="THIOLASE_1"/>
    <property type="match status" value="1"/>
</dbReference>
<dbReference type="PROSITE" id="PS00737">
    <property type="entry name" value="THIOLASE_2"/>
    <property type="match status" value="1"/>
</dbReference>
<dbReference type="PROSITE" id="PS00099">
    <property type="entry name" value="THIOLASE_3"/>
    <property type="match status" value="1"/>
</dbReference>
<gene>
    <name evidence="1" type="primary">fadA</name>
    <name type="ordered locus">ACIAD0334</name>
</gene>
<evidence type="ECO:0000255" key="1">
    <source>
        <dbReference type="HAMAP-Rule" id="MF_01620"/>
    </source>
</evidence>
<accession>Q6FF69</accession>
<name>FADA_ACIAD</name>
<feature type="chain" id="PRO_0000206368" description="3-ketoacyl-CoA thiolase">
    <location>
        <begin position="1"/>
        <end position="390"/>
    </location>
</feature>
<feature type="active site" description="Acyl-thioester intermediate" evidence="1">
    <location>
        <position position="95"/>
    </location>
</feature>
<feature type="active site" description="Proton acceptor" evidence="1">
    <location>
        <position position="346"/>
    </location>
</feature>
<feature type="active site" description="Proton acceptor" evidence="1">
    <location>
        <position position="376"/>
    </location>
</feature>
<keyword id="KW-0012">Acyltransferase</keyword>
<keyword id="KW-0963">Cytoplasm</keyword>
<keyword id="KW-0276">Fatty acid metabolism</keyword>
<keyword id="KW-0442">Lipid degradation</keyword>
<keyword id="KW-0443">Lipid metabolism</keyword>
<keyword id="KW-0808">Transferase</keyword>
<reference key="1">
    <citation type="journal article" date="2004" name="Nucleic Acids Res.">
        <title>Unique features revealed by the genome sequence of Acinetobacter sp. ADP1, a versatile and naturally transformation competent bacterium.</title>
        <authorList>
            <person name="Barbe V."/>
            <person name="Vallenet D."/>
            <person name="Fonknechten N."/>
            <person name="Kreimeyer A."/>
            <person name="Oztas S."/>
            <person name="Labarre L."/>
            <person name="Cruveiller S."/>
            <person name="Robert C."/>
            <person name="Duprat S."/>
            <person name="Wincker P."/>
            <person name="Ornston L.N."/>
            <person name="Weissenbach J."/>
            <person name="Marliere P."/>
            <person name="Cohen G.N."/>
            <person name="Medigue C."/>
        </authorList>
    </citation>
    <scope>NUCLEOTIDE SEQUENCE [LARGE SCALE GENOMIC DNA]</scope>
    <source>
        <strain>ATCC 33305 / BD413 / ADP1</strain>
    </source>
</reference>
<protein>
    <recommendedName>
        <fullName evidence="1">3-ketoacyl-CoA thiolase</fullName>
        <ecNumber evidence="1">2.3.1.16</ecNumber>
    </recommendedName>
    <alternativeName>
        <fullName evidence="1">Acetyl-CoA acyltransferase</fullName>
    </alternativeName>
    <alternativeName>
        <fullName evidence="1">Beta-ketothiolase</fullName>
    </alternativeName>
    <alternativeName>
        <fullName evidence="1">Fatty acid oxidation complex subunit beta</fullName>
    </alternativeName>
</protein>